<gene>
    <name evidence="1" type="primary">secA1</name>
    <name type="ordered locus">SAV_5071</name>
</gene>
<proteinExistence type="inferred from homology"/>
<organism>
    <name type="scientific">Streptomyces avermitilis (strain ATCC 31267 / DSM 46492 / JCM 5070 / NBRC 14893 / NCIMB 12804 / NRRL 8165 / MA-4680)</name>
    <dbReference type="NCBI Taxonomy" id="227882"/>
    <lineage>
        <taxon>Bacteria</taxon>
        <taxon>Bacillati</taxon>
        <taxon>Actinomycetota</taxon>
        <taxon>Actinomycetes</taxon>
        <taxon>Kitasatosporales</taxon>
        <taxon>Streptomycetaceae</taxon>
        <taxon>Streptomyces</taxon>
    </lineage>
</organism>
<evidence type="ECO:0000255" key="1">
    <source>
        <dbReference type="HAMAP-Rule" id="MF_01382"/>
    </source>
</evidence>
<evidence type="ECO:0000256" key="2">
    <source>
        <dbReference type="SAM" id="MobiDB-lite"/>
    </source>
</evidence>
<name>SECA1_STRAW</name>
<feature type="chain" id="PRO_0000318464" description="Protein translocase subunit SecA 1">
    <location>
        <begin position="1"/>
        <end position="939"/>
    </location>
</feature>
<feature type="region of interest" description="Disordered" evidence="2">
    <location>
        <begin position="848"/>
        <end position="939"/>
    </location>
</feature>
<feature type="compositionally biased region" description="Basic and acidic residues" evidence="2">
    <location>
        <begin position="852"/>
        <end position="863"/>
    </location>
</feature>
<feature type="compositionally biased region" description="Basic and acidic residues" evidence="2">
    <location>
        <begin position="872"/>
        <end position="889"/>
    </location>
</feature>
<feature type="compositionally biased region" description="Basic and acidic residues" evidence="2">
    <location>
        <begin position="914"/>
        <end position="925"/>
    </location>
</feature>
<feature type="compositionally biased region" description="Basic residues" evidence="2">
    <location>
        <begin position="926"/>
        <end position="939"/>
    </location>
</feature>
<feature type="binding site" evidence="1">
    <location>
        <position position="85"/>
    </location>
    <ligand>
        <name>ATP</name>
        <dbReference type="ChEBI" id="CHEBI:30616"/>
    </ligand>
</feature>
<feature type="binding site" evidence="1">
    <location>
        <begin position="103"/>
        <end position="107"/>
    </location>
    <ligand>
        <name>ATP</name>
        <dbReference type="ChEBI" id="CHEBI:30616"/>
    </ligand>
</feature>
<feature type="binding site" evidence="1">
    <location>
        <position position="504"/>
    </location>
    <ligand>
        <name>ATP</name>
        <dbReference type="ChEBI" id="CHEBI:30616"/>
    </ligand>
</feature>
<protein>
    <recommendedName>
        <fullName evidence="1">Protein translocase subunit SecA 1</fullName>
        <ecNumber evidence="1">7.4.2.8</ecNumber>
    </recommendedName>
</protein>
<dbReference type="EC" id="7.4.2.8" evidence="1"/>
<dbReference type="EMBL" id="BA000030">
    <property type="protein sequence ID" value="BAC72783.1"/>
    <property type="molecule type" value="Genomic_DNA"/>
</dbReference>
<dbReference type="SMR" id="Q82DB1"/>
<dbReference type="GeneID" id="41542154"/>
<dbReference type="KEGG" id="sma:SAVERM_5071"/>
<dbReference type="eggNOG" id="COG0653">
    <property type="taxonomic scope" value="Bacteria"/>
</dbReference>
<dbReference type="HOGENOM" id="CLU_005314_3_0_11"/>
<dbReference type="OrthoDB" id="9805579at2"/>
<dbReference type="Proteomes" id="UP000000428">
    <property type="component" value="Chromosome"/>
</dbReference>
<dbReference type="GO" id="GO:0031522">
    <property type="term" value="C:cell envelope Sec protein transport complex"/>
    <property type="evidence" value="ECO:0007669"/>
    <property type="project" value="TreeGrafter"/>
</dbReference>
<dbReference type="GO" id="GO:0005829">
    <property type="term" value="C:cytosol"/>
    <property type="evidence" value="ECO:0007669"/>
    <property type="project" value="TreeGrafter"/>
</dbReference>
<dbReference type="GO" id="GO:0005886">
    <property type="term" value="C:plasma membrane"/>
    <property type="evidence" value="ECO:0007669"/>
    <property type="project" value="UniProtKB-SubCell"/>
</dbReference>
<dbReference type="GO" id="GO:0005524">
    <property type="term" value="F:ATP binding"/>
    <property type="evidence" value="ECO:0007669"/>
    <property type="project" value="UniProtKB-UniRule"/>
</dbReference>
<dbReference type="GO" id="GO:0008564">
    <property type="term" value="F:protein-exporting ATPase activity"/>
    <property type="evidence" value="ECO:0007669"/>
    <property type="project" value="UniProtKB-EC"/>
</dbReference>
<dbReference type="GO" id="GO:0065002">
    <property type="term" value="P:intracellular protein transmembrane transport"/>
    <property type="evidence" value="ECO:0007669"/>
    <property type="project" value="UniProtKB-UniRule"/>
</dbReference>
<dbReference type="GO" id="GO:0017038">
    <property type="term" value="P:protein import"/>
    <property type="evidence" value="ECO:0007669"/>
    <property type="project" value="InterPro"/>
</dbReference>
<dbReference type="GO" id="GO:0006605">
    <property type="term" value="P:protein targeting"/>
    <property type="evidence" value="ECO:0007669"/>
    <property type="project" value="UniProtKB-UniRule"/>
</dbReference>
<dbReference type="GO" id="GO:0043952">
    <property type="term" value="P:protein transport by the Sec complex"/>
    <property type="evidence" value="ECO:0007669"/>
    <property type="project" value="TreeGrafter"/>
</dbReference>
<dbReference type="CDD" id="cd17928">
    <property type="entry name" value="DEXDc_SecA"/>
    <property type="match status" value="1"/>
</dbReference>
<dbReference type="CDD" id="cd18803">
    <property type="entry name" value="SF2_C_secA"/>
    <property type="match status" value="1"/>
</dbReference>
<dbReference type="FunFam" id="1.10.3060.10:FF:000002">
    <property type="entry name" value="Preprotein translocase subunit SecA"/>
    <property type="match status" value="1"/>
</dbReference>
<dbReference type="FunFam" id="3.40.50.300:FF:000113">
    <property type="entry name" value="Preprotein translocase subunit SecA"/>
    <property type="match status" value="1"/>
</dbReference>
<dbReference type="FunFam" id="3.40.50.300:FF:000334">
    <property type="entry name" value="Protein translocase subunit SecA"/>
    <property type="match status" value="1"/>
</dbReference>
<dbReference type="FunFam" id="3.90.1440.10:FF:000002">
    <property type="entry name" value="Protein translocase subunit SecA"/>
    <property type="match status" value="1"/>
</dbReference>
<dbReference type="Gene3D" id="1.10.3060.10">
    <property type="entry name" value="Helical scaffold and wing domains of SecA"/>
    <property type="match status" value="1"/>
</dbReference>
<dbReference type="Gene3D" id="3.40.50.300">
    <property type="entry name" value="P-loop containing nucleotide triphosphate hydrolases"/>
    <property type="match status" value="2"/>
</dbReference>
<dbReference type="Gene3D" id="3.90.1440.10">
    <property type="entry name" value="SecA, preprotein cross-linking domain"/>
    <property type="match status" value="1"/>
</dbReference>
<dbReference type="HAMAP" id="MF_01382">
    <property type="entry name" value="SecA"/>
    <property type="match status" value="1"/>
</dbReference>
<dbReference type="InterPro" id="IPR014001">
    <property type="entry name" value="Helicase_ATP-bd"/>
</dbReference>
<dbReference type="InterPro" id="IPR001650">
    <property type="entry name" value="Helicase_C-like"/>
</dbReference>
<dbReference type="InterPro" id="IPR027417">
    <property type="entry name" value="P-loop_NTPase"/>
</dbReference>
<dbReference type="InterPro" id="IPR000185">
    <property type="entry name" value="SecA"/>
</dbReference>
<dbReference type="InterPro" id="IPR020937">
    <property type="entry name" value="SecA_CS"/>
</dbReference>
<dbReference type="InterPro" id="IPR011115">
    <property type="entry name" value="SecA_DEAD"/>
</dbReference>
<dbReference type="InterPro" id="IPR014018">
    <property type="entry name" value="SecA_motor_DEAD"/>
</dbReference>
<dbReference type="InterPro" id="IPR011130">
    <property type="entry name" value="SecA_preprotein_X-link_dom"/>
</dbReference>
<dbReference type="InterPro" id="IPR044722">
    <property type="entry name" value="SecA_SF2_C"/>
</dbReference>
<dbReference type="InterPro" id="IPR011116">
    <property type="entry name" value="SecA_Wing/Scaffold"/>
</dbReference>
<dbReference type="InterPro" id="IPR036266">
    <property type="entry name" value="SecA_Wing/Scaffold_sf"/>
</dbReference>
<dbReference type="InterPro" id="IPR036670">
    <property type="entry name" value="SecA_X-link_sf"/>
</dbReference>
<dbReference type="NCBIfam" id="NF009538">
    <property type="entry name" value="PRK12904.1"/>
    <property type="match status" value="1"/>
</dbReference>
<dbReference type="NCBIfam" id="TIGR00963">
    <property type="entry name" value="secA"/>
    <property type="match status" value="1"/>
</dbReference>
<dbReference type="PANTHER" id="PTHR30612:SF0">
    <property type="entry name" value="CHLOROPLAST PROTEIN-TRANSPORTING ATPASE"/>
    <property type="match status" value="1"/>
</dbReference>
<dbReference type="PANTHER" id="PTHR30612">
    <property type="entry name" value="SECA INNER MEMBRANE COMPONENT OF SEC PROTEIN SECRETION SYSTEM"/>
    <property type="match status" value="1"/>
</dbReference>
<dbReference type="Pfam" id="PF21090">
    <property type="entry name" value="P-loop_SecA"/>
    <property type="match status" value="1"/>
</dbReference>
<dbReference type="Pfam" id="PF07517">
    <property type="entry name" value="SecA_DEAD"/>
    <property type="match status" value="1"/>
</dbReference>
<dbReference type="Pfam" id="PF01043">
    <property type="entry name" value="SecA_PP_bind"/>
    <property type="match status" value="1"/>
</dbReference>
<dbReference type="Pfam" id="PF07516">
    <property type="entry name" value="SecA_SW"/>
    <property type="match status" value="1"/>
</dbReference>
<dbReference type="PRINTS" id="PR00906">
    <property type="entry name" value="SECA"/>
</dbReference>
<dbReference type="SMART" id="SM00957">
    <property type="entry name" value="SecA_DEAD"/>
    <property type="match status" value="1"/>
</dbReference>
<dbReference type="SMART" id="SM00958">
    <property type="entry name" value="SecA_PP_bind"/>
    <property type="match status" value="1"/>
</dbReference>
<dbReference type="SUPFAM" id="SSF81886">
    <property type="entry name" value="Helical scaffold and wing domains of SecA"/>
    <property type="match status" value="1"/>
</dbReference>
<dbReference type="SUPFAM" id="SSF52540">
    <property type="entry name" value="P-loop containing nucleoside triphosphate hydrolases"/>
    <property type="match status" value="2"/>
</dbReference>
<dbReference type="SUPFAM" id="SSF81767">
    <property type="entry name" value="Pre-protein crosslinking domain of SecA"/>
    <property type="match status" value="1"/>
</dbReference>
<dbReference type="PROSITE" id="PS01312">
    <property type="entry name" value="SECA"/>
    <property type="match status" value="1"/>
</dbReference>
<dbReference type="PROSITE" id="PS51196">
    <property type="entry name" value="SECA_MOTOR_DEAD"/>
    <property type="match status" value="1"/>
</dbReference>
<comment type="function">
    <text evidence="1">Part of the Sec protein translocase complex. Interacts with the SecYEG preprotein conducting channel. Has a central role in coupling the hydrolysis of ATP to the transfer of proteins into and across the cell membrane, serving as an ATP-driven molecular motor driving the stepwise translocation of polypeptide chains across the membrane.</text>
</comment>
<comment type="catalytic activity">
    <reaction evidence="1">
        <text>ATP + H2O + cellular proteinSide 1 = ADP + phosphate + cellular proteinSide 2.</text>
        <dbReference type="EC" id="7.4.2.8"/>
    </reaction>
</comment>
<comment type="subunit">
    <text evidence="1">Monomer and homodimer. Part of the essential Sec protein translocation apparatus which comprises SecA, SecYEG and auxiliary proteins SecDF. Other proteins may also be involved.</text>
</comment>
<comment type="subcellular location">
    <subcellularLocation>
        <location evidence="1">Cell membrane</location>
        <topology evidence="1">Peripheral membrane protein</topology>
        <orientation evidence="1">Cytoplasmic side</orientation>
    </subcellularLocation>
    <subcellularLocation>
        <location evidence="1">Cytoplasm</location>
    </subcellularLocation>
    <text evidence="1">Distribution is 50-50.</text>
</comment>
<comment type="similarity">
    <text evidence="1">Belongs to the SecA family.</text>
</comment>
<accession>Q82DB1</accession>
<keyword id="KW-0067">ATP-binding</keyword>
<keyword id="KW-1003">Cell membrane</keyword>
<keyword id="KW-0963">Cytoplasm</keyword>
<keyword id="KW-0472">Membrane</keyword>
<keyword id="KW-0547">Nucleotide-binding</keyword>
<keyword id="KW-0653">Protein transport</keyword>
<keyword id="KW-1185">Reference proteome</keyword>
<keyword id="KW-1278">Translocase</keyword>
<keyword id="KW-0811">Translocation</keyword>
<keyword id="KW-0813">Transport</keyword>
<reference key="1">
    <citation type="journal article" date="2001" name="Proc. Natl. Acad. Sci. U.S.A.">
        <title>Genome sequence of an industrial microorganism Streptomyces avermitilis: deducing the ability of producing secondary metabolites.</title>
        <authorList>
            <person name="Omura S."/>
            <person name="Ikeda H."/>
            <person name="Ishikawa J."/>
            <person name="Hanamoto A."/>
            <person name="Takahashi C."/>
            <person name="Shinose M."/>
            <person name="Takahashi Y."/>
            <person name="Horikawa H."/>
            <person name="Nakazawa H."/>
            <person name="Osonoe T."/>
            <person name="Kikuchi H."/>
            <person name="Shiba T."/>
            <person name="Sakaki Y."/>
            <person name="Hattori M."/>
        </authorList>
    </citation>
    <scope>NUCLEOTIDE SEQUENCE [LARGE SCALE GENOMIC DNA]</scope>
    <source>
        <strain>ATCC 31267 / DSM 46492 / JCM 5070 / NBRC 14893 / NCIMB 12804 / NRRL 8165 / MA-4680</strain>
    </source>
</reference>
<reference key="2">
    <citation type="journal article" date="2003" name="Nat. Biotechnol.">
        <title>Complete genome sequence and comparative analysis of the industrial microorganism Streptomyces avermitilis.</title>
        <authorList>
            <person name="Ikeda H."/>
            <person name="Ishikawa J."/>
            <person name="Hanamoto A."/>
            <person name="Shinose M."/>
            <person name="Kikuchi H."/>
            <person name="Shiba T."/>
            <person name="Sakaki Y."/>
            <person name="Hattori M."/>
            <person name="Omura S."/>
        </authorList>
    </citation>
    <scope>NUCLEOTIDE SEQUENCE [LARGE SCALE GENOMIC DNA]</scope>
    <source>
        <strain>ATCC 31267 / DSM 46492 / JCM 5070 / NBRC 14893 / NCIMB 12804 / NRRL 8165 / MA-4680</strain>
    </source>
</reference>
<sequence length="939" mass="105778">MSVLSKIMRAGEGKILRKLHRIADQVNSIEEDFVDLSDAELRALTDEYKQRYADGESLDDLLPEAFATVREAAKRVLGQRHYDVQMMGGAALHLGYVAEMKTGEGKTLVGTLPAYLNALSGDGVHLITVNDYLAERDSEMMGRVHKFLGLSVGCILANMTPAQRREQYGCDITYGTNNEFGFDYLRDNMAWSQDELVQRGHNFAVVDEVDSILVDEARTPLIISGPADQATKWYGDFAKLVTRLKKGEAGNTLKGIEETGDYEVDEKKRTVAIHESGVAKVEDWLGIDNLYESVNTPLVGYLNNAIKAKELFKKDKDYVVIDGEVMIVDEHTGRILAGRRYNEGMHQAIEAKEGVDIKDENQTLATITLQNFFRLYNKLSGMTGTAMTEAAEFHQIYKLGVVPIPTNKPMVRKDQSDLIYRTEVAKFDAVVDDIAEKHEKGQPILVGTTSVEKSEYLSQQLSKRGIQHEVLNAKQHDREATIVAQAGRKGAVTVATNMAGRGTDIKLGGNPDDLAEAELRQRGLDPEEHIEEWAAALPAALERAEKAVKAEFEEVKELGGLYVLGTERHESRRIDNQLRGRSGRQGDPGESRFYLSLGDDLMRLFKAQMVERVMSMANVPDDVPIENKMVTRAIASAQSQVETQNFETRKNVLKYDEVLNRQREVIYGERRRVLEGEDLQEQIHHFMDDTIDAYIEAETAEGFAEEWDLDRLWGAFKQLYPVKVTVDELEEAAGDRAGLTAEFISESIKDDIHEQYEQRETQLGSEIMRELERRVVLSVLDRKWREHLYEMDYLQEGIGLRAMAQKDPLVEYQREGFDMFTAMMDGIKEESVGYLFNLEVQVEQQVEEVPVEDEKPSLEKEDAVPAQAGARPEIRAKGLEAPQRPDRLHFSAPTVDGEGGIIEGDFSSDDDEEPVRSEADGLTRAERRKQSKGGRRRKK</sequence>